<comment type="function">
    <text evidence="1">Catalyzes the reversible transfer of the terminal phosphate group between ATP and AMP. Plays an important role in cellular energy homeostasis and in adenine nucleotide metabolism.</text>
</comment>
<comment type="catalytic activity">
    <reaction evidence="1">
        <text>AMP + ATP = 2 ADP</text>
        <dbReference type="Rhea" id="RHEA:12973"/>
        <dbReference type="ChEBI" id="CHEBI:30616"/>
        <dbReference type="ChEBI" id="CHEBI:456215"/>
        <dbReference type="ChEBI" id="CHEBI:456216"/>
        <dbReference type="EC" id="2.7.4.3"/>
    </reaction>
</comment>
<comment type="pathway">
    <text evidence="1">Purine metabolism; AMP biosynthesis via salvage pathway; AMP from ADP: step 1/1.</text>
</comment>
<comment type="subunit">
    <text evidence="1">Monomer.</text>
</comment>
<comment type="subcellular location">
    <subcellularLocation>
        <location evidence="1">Cytoplasm</location>
    </subcellularLocation>
</comment>
<comment type="domain">
    <text evidence="1">Consists of three domains, a large central CORE domain and two small peripheral domains, NMPbind and LID, which undergo movements during catalysis. The LID domain closes over the site of phosphoryl transfer upon ATP binding. Assembling and dissambling the active center during each catalytic cycle provides an effective means to prevent ATP hydrolysis.</text>
</comment>
<comment type="similarity">
    <text evidence="1">Belongs to the adenylate kinase family.</text>
</comment>
<accession>B4T9I1</accession>
<protein>
    <recommendedName>
        <fullName evidence="1">Adenylate kinase</fullName>
        <shortName evidence="1">AK</shortName>
        <ecNumber evidence="1">2.7.4.3</ecNumber>
    </recommendedName>
    <alternativeName>
        <fullName evidence="1">ATP-AMP transphosphorylase</fullName>
    </alternativeName>
    <alternativeName>
        <fullName evidence="1">ATP:AMP phosphotransferase</fullName>
    </alternativeName>
    <alternativeName>
        <fullName evidence="1">Adenylate monophosphate kinase</fullName>
    </alternativeName>
</protein>
<dbReference type="EC" id="2.7.4.3" evidence="1"/>
<dbReference type="EMBL" id="CP001120">
    <property type="protein sequence ID" value="ACF65967.1"/>
    <property type="molecule type" value="Genomic_DNA"/>
</dbReference>
<dbReference type="RefSeq" id="WP_001220237.1">
    <property type="nucleotide sequence ID" value="NC_011083.1"/>
</dbReference>
<dbReference type="SMR" id="B4T9I1"/>
<dbReference type="KEGG" id="seh:SeHA_C0593"/>
<dbReference type="HOGENOM" id="CLU_032354_1_2_6"/>
<dbReference type="UniPathway" id="UPA00588">
    <property type="reaction ID" value="UER00649"/>
</dbReference>
<dbReference type="Proteomes" id="UP000001866">
    <property type="component" value="Chromosome"/>
</dbReference>
<dbReference type="GO" id="GO:0005737">
    <property type="term" value="C:cytoplasm"/>
    <property type="evidence" value="ECO:0007669"/>
    <property type="project" value="UniProtKB-SubCell"/>
</dbReference>
<dbReference type="GO" id="GO:0004017">
    <property type="term" value="F:adenylate kinase activity"/>
    <property type="evidence" value="ECO:0007669"/>
    <property type="project" value="UniProtKB-UniRule"/>
</dbReference>
<dbReference type="GO" id="GO:0005524">
    <property type="term" value="F:ATP binding"/>
    <property type="evidence" value="ECO:0007669"/>
    <property type="project" value="UniProtKB-UniRule"/>
</dbReference>
<dbReference type="GO" id="GO:0044209">
    <property type="term" value="P:AMP salvage"/>
    <property type="evidence" value="ECO:0007669"/>
    <property type="project" value="UniProtKB-UniRule"/>
</dbReference>
<dbReference type="CDD" id="cd01428">
    <property type="entry name" value="ADK"/>
    <property type="match status" value="1"/>
</dbReference>
<dbReference type="FunFam" id="3.40.50.300:FF:000106">
    <property type="entry name" value="Adenylate kinase mitochondrial"/>
    <property type="match status" value="1"/>
</dbReference>
<dbReference type="Gene3D" id="3.40.50.300">
    <property type="entry name" value="P-loop containing nucleotide triphosphate hydrolases"/>
    <property type="match status" value="1"/>
</dbReference>
<dbReference type="HAMAP" id="MF_00235">
    <property type="entry name" value="Adenylate_kinase_Adk"/>
    <property type="match status" value="1"/>
</dbReference>
<dbReference type="InterPro" id="IPR006259">
    <property type="entry name" value="Adenyl_kin_sub"/>
</dbReference>
<dbReference type="InterPro" id="IPR000850">
    <property type="entry name" value="Adenylat/UMP-CMP_kin"/>
</dbReference>
<dbReference type="InterPro" id="IPR033690">
    <property type="entry name" value="Adenylat_kinase_CS"/>
</dbReference>
<dbReference type="InterPro" id="IPR007862">
    <property type="entry name" value="Adenylate_kinase_lid-dom"/>
</dbReference>
<dbReference type="InterPro" id="IPR027417">
    <property type="entry name" value="P-loop_NTPase"/>
</dbReference>
<dbReference type="NCBIfam" id="TIGR01351">
    <property type="entry name" value="adk"/>
    <property type="match status" value="1"/>
</dbReference>
<dbReference type="NCBIfam" id="NF001379">
    <property type="entry name" value="PRK00279.1-1"/>
    <property type="match status" value="1"/>
</dbReference>
<dbReference type="NCBIfam" id="NF001380">
    <property type="entry name" value="PRK00279.1-2"/>
    <property type="match status" value="1"/>
</dbReference>
<dbReference type="NCBIfam" id="NF001381">
    <property type="entry name" value="PRK00279.1-3"/>
    <property type="match status" value="1"/>
</dbReference>
<dbReference type="NCBIfam" id="NF011100">
    <property type="entry name" value="PRK14527.1"/>
    <property type="match status" value="1"/>
</dbReference>
<dbReference type="PANTHER" id="PTHR23359">
    <property type="entry name" value="NUCLEOTIDE KINASE"/>
    <property type="match status" value="1"/>
</dbReference>
<dbReference type="Pfam" id="PF00406">
    <property type="entry name" value="ADK"/>
    <property type="match status" value="1"/>
</dbReference>
<dbReference type="Pfam" id="PF05191">
    <property type="entry name" value="ADK_lid"/>
    <property type="match status" value="1"/>
</dbReference>
<dbReference type="PRINTS" id="PR00094">
    <property type="entry name" value="ADENYLTKNASE"/>
</dbReference>
<dbReference type="SUPFAM" id="SSF52540">
    <property type="entry name" value="P-loop containing nucleoside triphosphate hydrolases"/>
    <property type="match status" value="1"/>
</dbReference>
<dbReference type="PROSITE" id="PS00113">
    <property type="entry name" value="ADENYLATE_KINASE"/>
    <property type="match status" value="1"/>
</dbReference>
<sequence length="214" mass="23488">MRIILLGAPGAGKGTQAQFIMEKYGIPQISTGDMLRAAVKSGSELGKQAKDIMDAGKLVTDELVIALVKERIAQEDCRNGFLLDGFPRTIPQADAMKEAGIVVDYVLEFDVPDELIVDRIVGRRVHAASGRVYHVKFNPPKVEGKDDVTGEDLTTRKDDQEETVRKRLVEYHQMTAPLIGYYQKEAEAGNTKYAKVDGTQAVADVRAALEKILG</sequence>
<feature type="chain" id="PRO_1000100604" description="Adenylate kinase">
    <location>
        <begin position="1"/>
        <end position="214"/>
    </location>
</feature>
<feature type="region of interest" description="NMP" evidence="1">
    <location>
        <begin position="30"/>
        <end position="59"/>
    </location>
</feature>
<feature type="region of interest" description="LID">
    <location>
        <begin position="122"/>
        <end position="159"/>
    </location>
</feature>
<feature type="binding site" evidence="1">
    <location>
        <begin position="10"/>
        <end position="15"/>
    </location>
    <ligand>
        <name>ATP</name>
        <dbReference type="ChEBI" id="CHEBI:30616"/>
    </ligand>
</feature>
<feature type="binding site" evidence="1">
    <location>
        <position position="31"/>
    </location>
    <ligand>
        <name>AMP</name>
        <dbReference type="ChEBI" id="CHEBI:456215"/>
    </ligand>
</feature>
<feature type="binding site" evidence="1">
    <location>
        <position position="36"/>
    </location>
    <ligand>
        <name>AMP</name>
        <dbReference type="ChEBI" id="CHEBI:456215"/>
    </ligand>
</feature>
<feature type="binding site" evidence="1">
    <location>
        <begin position="57"/>
        <end position="59"/>
    </location>
    <ligand>
        <name>AMP</name>
        <dbReference type="ChEBI" id="CHEBI:456215"/>
    </ligand>
</feature>
<feature type="binding site" evidence="1">
    <location>
        <begin position="85"/>
        <end position="88"/>
    </location>
    <ligand>
        <name>AMP</name>
        <dbReference type="ChEBI" id="CHEBI:456215"/>
    </ligand>
</feature>
<feature type="binding site" evidence="1">
    <location>
        <position position="92"/>
    </location>
    <ligand>
        <name>AMP</name>
        <dbReference type="ChEBI" id="CHEBI:456215"/>
    </ligand>
</feature>
<feature type="binding site" evidence="1">
    <location>
        <position position="123"/>
    </location>
    <ligand>
        <name>ATP</name>
        <dbReference type="ChEBI" id="CHEBI:30616"/>
    </ligand>
</feature>
<feature type="binding site" evidence="1">
    <location>
        <begin position="132"/>
        <end position="133"/>
    </location>
    <ligand>
        <name>ATP</name>
        <dbReference type="ChEBI" id="CHEBI:30616"/>
    </ligand>
</feature>
<feature type="binding site" evidence="1">
    <location>
        <position position="156"/>
    </location>
    <ligand>
        <name>AMP</name>
        <dbReference type="ChEBI" id="CHEBI:456215"/>
    </ligand>
</feature>
<feature type="binding site" evidence="1">
    <location>
        <position position="167"/>
    </location>
    <ligand>
        <name>AMP</name>
        <dbReference type="ChEBI" id="CHEBI:456215"/>
    </ligand>
</feature>
<feature type="binding site" evidence="1">
    <location>
        <position position="200"/>
    </location>
    <ligand>
        <name>ATP</name>
        <dbReference type="ChEBI" id="CHEBI:30616"/>
    </ligand>
</feature>
<organism>
    <name type="scientific">Salmonella heidelberg (strain SL476)</name>
    <dbReference type="NCBI Taxonomy" id="454169"/>
    <lineage>
        <taxon>Bacteria</taxon>
        <taxon>Pseudomonadati</taxon>
        <taxon>Pseudomonadota</taxon>
        <taxon>Gammaproteobacteria</taxon>
        <taxon>Enterobacterales</taxon>
        <taxon>Enterobacteriaceae</taxon>
        <taxon>Salmonella</taxon>
    </lineage>
</organism>
<keyword id="KW-0067">ATP-binding</keyword>
<keyword id="KW-0963">Cytoplasm</keyword>
<keyword id="KW-0418">Kinase</keyword>
<keyword id="KW-0545">Nucleotide biosynthesis</keyword>
<keyword id="KW-0547">Nucleotide-binding</keyword>
<keyword id="KW-0808">Transferase</keyword>
<name>KAD_SALHS</name>
<evidence type="ECO:0000255" key="1">
    <source>
        <dbReference type="HAMAP-Rule" id="MF_00235"/>
    </source>
</evidence>
<gene>
    <name evidence="1" type="primary">adk</name>
    <name type="ordered locus">SeHA_C0593</name>
</gene>
<proteinExistence type="inferred from homology"/>
<reference key="1">
    <citation type="journal article" date="2011" name="J. Bacteriol.">
        <title>Comparative genomics of 28 Salmonella enterica isolates: evidence for CRISPR-mediated adaptive sublineage evolution.</title>
        <authorList>
            <person name="Fricke W.F."/>
            <person name="Mammel M.K."/>
            <person name="McDermott P.F."/>
            <person name="Tartera C."/>
            <person name="White D.G."/>
            <person name="Leclerc J.E."/>
            <person name="Ravel J."/>
            <person name="Cebula T.A."/>
        </authorList>
    </citation>
    <scope>NUCLEOTIDE SEQUENCE [LARGE SCALE GENOMIC DNA]</scope>
    <source>
        <strain>SL476</strain>
    </source>
</reference>